<evidence type="ECO:0000255" key="1">
    <source>
        <dbReference type="HAMAP-Rule" id="MF_01398"/>
    </source>
</evidence>
<feature type="chain" id="PRO_0000368581" description="ATP synthase subunit b 2">
    <location>
        <begin position="1"/>
        <end position="159"/>
    </location>
</feature>
<feature type="transmembrane region" description="Helical" evidence="1">
    <location>
        <begin position="1"/>
        <end position="21"/>
    </location>
</feature>
<reference key="1">
    <citation type="submission" date="2006-06" db="EMBL/GenBank/DDBJ databases">
        <title>Complete sequence of chromosome of Mesorhizobium sp. BNC1.</title>
        <authorList>
            <consortium name="US DOE Joint Genome Institute"/>
            <person name="Copeland A."/>
            <person name="Lucas S."/>
            <person name="Lapidus A."/>
            <person name="Barry K."/>
            <person name="Detter J.C."/>
            <person name="Glavina del Rio T."/>
            <person name="Hammon N."/>
            <person name="Israni S."/>
            <person name="Dalin E."/>
            <person name="Tice H."/>
            <person name="Pitluck S."/>
            <person name="Chertkov O."/>
            <person name="Brettin T."/>
            <person name="Bruce D."/>
            <person name="Han C."/>
            <person name="Tapia R."/>
            <person name="Gilna P."/>
            <person name="Schmutz J."/>
            <person name="Larimer F."/>
            <person name="Land M."/>
            <person name="Hauser L."/>
            <person name="Kyrpides N."/>
            <person name="Mikhailova N."/>
            <person name="Richardson P."/>
        </authorList>
    </citation>
    <scope>NUCLEOTIDE SEQUENCE [LARGE SCALE GENOMIC DNA]</scope>
    <source>
        <strain>BNC1</strain>
    </source>
</reference>
<organism>
    <name type="scientific">Chelativorans sp. (strain BNC1)</name>
    <dbReference type="NCBI Taxonomy" id="266779"/>
    <lineage>
        <taxon>Bacteria</taxon>
        <taxon>Pseudomonadati</taxon>
        <taxon>Pseudomonadota</taxon>
        <taxon>Alphaproteobacteria</taxon>
        <taxon>Hyphomicrobiales</taxon>
        <taxon>Phyllobacteriaceae</taxon>
        <taxon>Chelativorans</taxon>
    </lineage>
</organism>
<name>ATPF2_CHESB</name>
<comment type="function">
    <text evidence="1">F(1)F(0) ATP synthase produces ATP from ADP in the presence of a proton or sodium gradient. F-type ATPases consist of two structural domains, F(1) containing the extramembraneous catalytic core and F(0) containing the membrane proton channel, linked together by a central stalk and a peripheral stalk. During catalysis, ATP synthesis in the catalytic domain of F(1) is coupled via a rotary mechanism of the central stalk subunits to proton translocation.</text>
</comment>
<comment type="function">
    <text evidence="1">Component of the F(0) channel, it forms part of the peripheral stalk, linking F(1) to F(0).</text>
</comment>
<comment type="subunit">
    <text evidence="1">F-type ATPases have 2 components, F(1) - the catalytic core - and F(0) - the membrane proton channel. F(1) has five subunits: alpha(3), beta(3), gamma(1), delta(1), epsilon(1). F(0) has three main subunits: a(1), b(2) and c(10-14). The alpha and beta chains form an alternating ring which encloses part of the gamma chain. F(1) is attached to F(0) by a central stalk formed by the gamma and epsilon chains, while a peripheral stalk is formed by the delta and b chains.</text>
</comment>
<comment type="subcellular location">
    <subcellularLocation>
        <location evidence="1">Cell inner membrane</location>
        <topology evidence="1">Single-pass membrane protein</topology>
    </subcellularLocation>
</comment>
<comment type="similarity">
    <text evidence="1">Belongs to the ATPase B chain family.</text>
</comment>
<keyword id="KW-0066">ATP synthesis</keyword>
<keyword id="KW-0997">Cell inner membrane</keyword>
<keyword id="KW-1003">Cell membrane</keyword>
<keyword id="KW-0138">CF(0)</keyword>
<keyword id="KW-0375">Hydrogen ion transport</keyword>
<keyword id="KW-0406">Ion transport</keyword>
<keyword id="KW-0472">Membrane</keyword>
<keyword id="KW-0812">Transmembrane</keyword>
<keyword id="KW-1133">Transmembrane helix</keyword>
<keyword id="KW-0813">Transport</keyword>
<accession>Q11KH6</accession>
<proteinExistence type="inferred from homology"/>
<sequence length="159" mass="17828">MDATFWALVALIIFVGILLYMKVPGMLAGSLDARAERIKNELEEARRLREEAQQLLAEYQRKRREAEQEAKELVDAAKREAKLIVSDAKVKTEEYVSRRTALAEQKIAQAERDAVNEVRSRAVDVAVAAAGKLLAEKIDTKTGSELFKASLQDVKTRLN</sequence>
<gene>
    <name evidence="1" type="primary">atpF2</name>
    <name type="ordered locus">Meso_0699</name>
</gene>
<protein>
    <recommendedName>
        <fullName evidence="1">ATP synthase subunit b 2</fullName>
    </recommendedName>
    <alternativeName>
        <fullName evidence="1">ATP synthase F(0) sector subunit b 2</fullName>
    </alternativeName>
    <alternativeName>
        <fullName evidence="1">ATPase subunit I 2</fullName>
    </alternativeName>
    <alternativeName>
        <fullName evidence="1">F-type ATPase subunit b 2</fullName>
        <shortName evidence="1">F-ATPase subunit b 2</shortName>
    </alternativeName>
</protein>
<dbReference type="EMBL" id="CP000390">
    <property type="protein sequence ID" value="ABG62099.1"/>
    <property type="molecule type" value="Genomic_DNA"/>
</dbReference>
<dbReference type="SMR" id="Q11KH6"/>
<dbReference type="STRING" id="266779.Meso_0699"/>
<dbReference type="KEGG" id="mes:Meso_0699"/>
<dbReference type="eggNOG" id="COG0711">
    <property type="taxonomic scope" value="Bacteria"/>
</dbReference>
<dbReference type="HOGENOM" id="CLU_079215_6_1_5"/>
<dbReference type="OrthoDB" id="8479836at2"/>
<dbReference type="GO" id="GO:0005886">
    <property type="term" value="C:plasma membrane"/>
    <property type="evidence" value="ECO:0007669"/>
    <property type="project" value="UniProtKB-SubCell"/>
</dbReference>
<dbReference type="GO" id="GO:0045259">
    <property type="term" value="C:proton-transporting ATP synthase complex"/>
    <property type="evidence" value="ECO:0007669"/>
    <property type="project" value="UniProtKB-KW"/>
</dbReference>
<dbReference type="GO" id="GO:0046933">
    <property type="term" value="F:proton-transporting ATP synthase activity, rotational mechanism"/>
    <property type="evidence" value="ECO:0007669"/>
    <property type="project" value="UniProtKB-UniRule"/>
</dbReference>
<dbReference type="GO" id="GO:0046961">
    <property type="term" value="F:proton-transporting ATPase activity, rotational mechanism"/>
    <property type="evidence" value="ECO:0007669"/>
    <property type="project" value="TreeGrafter"/>
</dbReference>
<dbReference type="CDD" id="cd06503">
    <property type="entry name" value="ATP-synt_Fo_b"/>
    <property type="match status" value="1"/>
</dbReference>
<dbReference type="HAMAP" id="MF_01398">
    <property type="entry name" value="ATP_synth_b_bprime"/>
    <property type="match status" value="1"/>
</dbReference>
<dbReference type="InterPro" id="IPR002146">
    <property type="entry name" value="ATP_synth_b/b'su_bac/chlpt"/>
</dbReference>
<dbReference type="InterPro" id="IPR050059">
    <property type="entry name" value="ATP_synthase_B_chain"/>
</dbReference>
<dbReference type="NCBIfam" id="NF006611">
    <property type="entry name" value="PRK09173.1"/>
    <property type="match status" value="1"/>
</dbReference>
<dbReference type="PANTHER" id="PTHR33445:SF1">
    <property type="entry name" value="ATP SYNTHASE SUBUNIT B"/>
    <property type="match status" value="1"/>
</dbReference>
<dbReference type="PANTHER" id="PTHR33445">
    <property type="entry name" value="ATP SYNTHASE SUBUNIT B', CHLOROPLASTIC"/>
    <property type="match status" value="1"/>
</dbReference>
<dbReference type="Pfam" id="PF00430">
    <property type="entry name" value="ATP-synt_B"/>
    <property type="match status" value="1"/>
</dbReference>